<proteinExistence type="evidence at protein level"/>
<organism>
    <name type="scientific">Dictyostelium discoideum</name>
    <name type="common">Social amoeba</name>
    <dbReference type="NCBI Taxonomy" id="44689"/>
    <lineage>
        <taxon>Eukaryota</taxon>
        <taxon>Amoebozoa</taxon>
        <taxon>Evosea</taxon>
        <taxon>Eumycetozoa</taxon>
        <taxon>Dictyostelia</taxon>
        <taxon>Dictyosteliales</taxon>
        <taxon>Dictyosteliaceae</taxon>
        <taxon>Dictyostelium</taxon>
    </lineage>
</organism>
<sequence>MSSVSVHYSTHKINKVRFLNRNFHNDTSLFVTGTNHPVLSKNKISVWGLESRQNSDEIEELASVPIDGIVTELKVIEINNKPMIIGSTSKGSIFMYSIFNLPNKFEYIGYDGLLDKKYENYNNINNINDTYDTCNLLKERIWFNSSSNNNNVNSNNINNNNYNNNNNNYNNNNNNNNNNNNNNNNNNNNGSCINSFDISYDQHSLVTVGNDGVMNLLSIENLIPIYTNRYIDGLSVNVVKSITSNQIITSGELGRYIKFWDIRSNSSQPVKTIKTQCPRIFSLAIHKDEQHIIAAGSSDGQVNLFDIRNDYSIDQNKTHNSNVWELSFSKSNPNQLYSCSEDGFIYQYSYNKDNLGGGGMMTLPNQINNTFDIYSKEVSLLQLPTSIGSIDSFDINSNINRLICCSTSSQCLIVKSL</sequence>
<feature type="chain" id="PRO_0000393273" description="Nuclear pore complex protein nup43">
    <location>
        <begin position="1"/>
        <end position="417"/>
    </location>
</feature>
<feature type="repeat" description="WD 1">
    <location>
        <begin position="13"/>
        <end position="57"/>
    </location>
</feature>
<feature type="repeat" description="WD 2">
    <location>
        <begin position="68"/>
        <end position="106"/>
    </location>
</feature>
<feature type="repeat" description="WD 3">
    <location>
        <begin position="188"/>
        <end position="227"/>
    </location>
</feature>
<feature type="repeat" description="WD 4">
    <location>
        <begin position="231"/>
        <end position="270"/>
    </location>
</feature>
<feature type="repeat" description="WD 5">
    <location>
        <begin position="275"/>
        <end position="315"/>
    </location>
</feature>
<feature type="repeat" description="WD 6">
    <location>
        <begin position="318"/>
        <end position="358"/>
    </location>
</feature>
<feature type="region of interest" description="Disordered" evidence="2">
    <location>
        <begin position="152"/>
        <end position="188"/>
    </location>
</feature>
<gene>
    <name type="primary">nup43</name>
    <name type="ORF">DDB_G0277955</name>
</gene>
<accession>Q54Z22</accession>
<reference key="1">
    <citation type="journal article" date="2005" name="Nature">
        <title>The genome of the social amoeba Dictyostelium discoideum.</title>
        <authorList>
            <person name="Eichinger L."/>
            <person name="Pachebat J.A."/>
            <person name="Gloeckner G."/>
            <person name="Rajandream M.A."/>
            <person name="Sucgang R."/>
            <person name="Berriman M."/>
            <person name="Song J."/>
            <person name="Olsen R."/>
            <person name="Szafranski K."/>
            <person name="Xu Q."/>
            <person name="Tunggal B."/>
            <person name="Kummerfeld S."/>
            <person name="Madera M."/>
            <person name="Konfortov B.A."/>
            <person name="Rivero F."/>
            <person name="Bankier A.T."/>
            <person name="Lehmann R."/>
            <person name="Hamlin N."/>
            <person name="Davies R."/>
            <person name="Gaudet P."/>
            <person name="Fey P."/>
            <person name="Pilcher K."/>
            <person name="Chen G."/>
            <person name="Saunders D."/>
            <person name="Sodergren E.J."/>
            <person name="Davis P."/>
            <person name="Kerhornou A."/>
            <person name="Nie X."/>
            <person name="Hall N."/>
            <person name="Anjard C."/>
            <person name="Hemphill L."/>
            <person name="Bason N."/>
            <person name="Farbrother P."/>
            <person name="Desany B."/>
            <person name="Just E."/>
            <person name="Morio T."/>
            <person name="Rost R."/>
            <person name="Churcher C.M."/>
            <person name="Cooper J."/>
            <person name="Haydock S."/>
            <person name="van Driessche N."/>
            <person name="Cronin A."/>
            <person name="Goodhead I."/>
            <person name="Muzny D.M."/>
            <person name="Mourier T."/>
            <person name="Pain A."/>
            <person name="Lu M."/>
            <person name="Harper D."/>
            <person name="Lindsay R."/>
            <person name="Hauser H."/>
            <person name="James K.D."/>
            <person name="Quiles M."/>
            <person name="Madan Babu M."/>
            <person name="Saito T."/>
            <person name="Buchrieser C."/>
            <person name="Wardroper A."/>
            <person name="Felder M."/>
            <person name="Thangavelu M."/>
            <person name="Johnson D."/>
            <person name="Knights A."/>
            <person name="Loulseged H."/>
            <person name="Mungall K.L."/>
            <person name="Oliver K."/>
            <person name="Price C."/>
            <person name="Quail M.A."/>
            <person name="Urushihara H."/>
            <person name="Hernandez J."/>
            <person name="Rabbinowitsch E."/>
            <person name="Steffen D."/>
            <person name="Sanders M."/>
            <person name="Ma J."/>
            <person name="Kohara Y."/>
            <person name="Sharp S."/>
            <person name="Simmonds M.N."/>
            <person name="Spiegler S."/>
            <person name="Tivey A."/>
            <person name="Sugano S."/>
            <person name="White B."/>
            <person name="Walker D."/>
            <person name="Woodward J.R."/>
            <person name="Winckler T."/>
            <person name="Tanaka Y."/>
            <person name="Shaulsky G."/>
            <person name="Schleicher M."/>
            <person name="Weinstock G.M."/>
            <person name="Rosenthal A."/>
            <person name="Cox E.C."/>
            <person name="Chisholm R.L."/>
            <person name="Gibbs R.A."/>
            <person name="Loomis W.F."/>
            <person name="Platzer M."/>
            <person name="Kay R.R."/>
            <person name="Williams J.G."/>
            <person name="Dear P.H."/>
            <person name="Noegel A.A."/>
            <person name="Barrell B.G."/>
            <person name="Kuspa A."/>
        </authorList>
    </citation>
    <scope>NUCLEOTIDE SEQUENCE [LARGE SCALE GENOMIC DNA]</scope>
    <source>
        <strain>AX4</strain>
    </source>
</reference>
<name>NUP43_DICDI</name>
<protein>
    <recommendedName>
        <fullName>Nuclear pore complex protein nup43</fullName>
    </recommendedName>
    <alternativeName>
        <fullName>Nucleoporin nup43</fullName>
    </alternativeName>
</protein>
<evidence type="ECO:0000250" key="1"/>
<evidence type="ECO:0000256" key="2">
    <source>
        <dbReference type="SAM" id="MobiDB-lite"/>
    </source>
</evidence>
<evidence type="ECO:0000305" key="3"/>
<comment type="function">
    <text evidence="1">Component of the nuclear pore complex, a complex required for the trafficking across the nuclear membrane.</text>
</comment>
<comment type="subunit">
    <text evidence="1">Component of the nuclear pore complex (NPC).</text>
</comment>
<comment type="subcellular location">
    <subcellularLocation>
        <location evidence="1">Nucleus</location>
        <location evidence="1">Nuclear pore complex</location>
    </subcellularLocation>
    <subcellularLocation>
        <location evidence="1">Nucleus membrane</location>
    </subcellularLocation>
</comment>
<comment type="similarity">
    <text evidence="3">Belongs to the NUP43 family.</text>
</comment>
<keyword id="KW-0002">3D-structure</keyword>
<keyword id="KW-0472">Membrane</keyword>
<keyword id="KW-0509">mRNA transport</keyword>
<keyword id="KW-0906">Nuclear pore complex</keyword>
<keyword id="KW-0539">Nucleus</keyword>
<keyword id="KW-0653">Protein transport</keyword>
<keyword id="KW-1185">Reference proteome</keyword>
<keyword id="KW-0677">Repeat</keyword>
<keyword id="KW-0811">Translocation</keyword>
<keyword id="KW-0813">Transport</keyword>
<keyword id="KW-0853">WD repeat</keyword>
<dbReference type="EMBL" id="AAFI02000023">
    <property type="protein sequence ID" value="EAL68150.1"/>
    <property type="molecule type" value="Genomic_DNA"/>
</dbReference>
<dbReference type="RefSeq" id="XP_642030.1">
    <property type="nucleotide sequence ID" value="XM_636938.1"/>
</dbReference>
<dbReference type="PDB" id="9HCJ">
    <property type="method" value="EM"/>
    <property type="resolution" value="30.00 A"/>
    <property type="chains" value="Q0/Q1/Q2/Q3=1-417"/>
</dbReference>
<dbReference type="PDBsum" id="9HCJ"/>
<dbReference type="SMR" id="Q54Z22"/>
<dbReference type="FunCoup" id="Q54Z22">
    <property type="interactions" value="42"/>
</dbReference>
<dbReference type="STRING" id="44689.Q54Z22"/>
<dbReference type="TCDB" id="1.I.1.1.5">
    <property type="family name" value="the nuclear pore complex (npc) family"/>
</dbReference>
<dbReference type="PaxDb" id="44689-DDB0235245"/>
<dbReference type="EnsemblProtists" id="EAL68150">
    <property type="protein sequence ID" value="EAL68150"/>
    <property type="gene ID" value="DDB_G0277955"/>
</dbReference>
<dbReference type="GeneID" id="8621241"/>
<dbReference type="KEGG" id="ddi:DDB_G0277955"/>
<dbReference type="dictyBase" id="DDB_G0277955">
    <property type="gene designation" value="nup43"/>
</dbReference>
<dbReference type="VEuPathDB" id="AmoebaDB:DDB_G0277955"/>
<dbReference type="eggNOG" id="KOG4714">
    <property type="taxonomic scope" value="Eukaryota"/>
</dbReference>
<dbReference type="HOGENOM" id="CLU_659598_0_0_1"/>
<dbReference type="InParanoid" id="Q54Z22"/>
<dbReference type="OMA" id="HDGDVMD"/>
<dbReference type="PhylomeDB" id="Q54Z22"/>
<dbReference type="PRO" id="PR:Q54Z22"/>
<dbReference type="Proteomes" id="UP000002195">
    <property type="component" value="Chromosome 3"/>
</dbReference>
<dbReference type="GO" id="GO:0031965">
    <property type="term" value="C:nuclear membrane"/>
    <property type="evidence" value="ECO:0007669"/>
    <property type="project" value="UniProtKB-SubCell"/>
</dbReference>
<dbReference type="GO" id="GO:0031080">
    <property type="term" value="C:nuclear pore outer ring"/>
    <property type="evidence" value="ECO:0000318"/>
    <property type="project" value="GO_Central"/>
</dbReference>
<dbReference type="GO" id="GO:0051028">
    <property type="term" value="P:mRNA transport"/>
    <property type="evidence" value="ECO:0007669"/>
    <property type="project" value="UniProtKB-KW"/>
</dbReference>
<dbReference type="GO" id="GO:0015031">
    <property type="term" value="P:protein transport"/>
    <property type="evidence" value="ECO:0007669"/>
    <property type="project" value="UniProtKB-KW"/>
</dbReference>
<dbReference type="Gene3D" id="2.130.10.10">
    <property type="entry name" value="YVTN repeat-like/Quinoprotein amine dehydrogenase"/>
    <property type="match status" value="1"/>
</dbReference>
<dbReference type="InterPro" id="IPR015943">
    <property type="entry name" value="WD40/YVTN_repeat-like_dom_sf"/>
</dbReference>
<dbReference type="InterPro" id="IPR036322">
    <property type="entry name" value="WD40_repeat_dom_sf"/>
</dbReference>
<dbReference type="InterPro" id="IPR001680">
    <property type="entry name" value="WD40_rpt"/>
</dbReference>
<dbReference type="PANTHER" id="PTHR22652">
    <property type="entry name" value="NUCLEOPORIN NUP43"/>
    <property type="match status" value="1"/>
</dbReference>
<dbReference type="PANTHER" id="PTHR22652:SF0">
    <property type="entry name" value="NUCLEOPORIN NUP43"/>
    <property type="match status" value="1"/>
</dbReference>
<dbReference type="Pfam" id="PF00400">
    <property type="entry name" value="WD40"/>
    <property type="match status" value="2"/>
</dbReference>
<dbReference type="SMART" id="SM00320">
    <property type="entry name" value="WD40"/>
    <property type="match status" value="4"/>
</dbReference>
<dbReference type="SUPFAM" id="SSF50978">
    <property type="entry name" value="WD40 repeat-like"/>
    <property type="match status" value="1"/>
</dbReference>
<dbReference type="PROSITE" id="PS50294">
    <property type="entry name" value="WD_REPEATS_REGION"/>
    <property type="match status" value="1"/>
</dbReference>